<sequence length="336" mass="36462">MDIIIVGFGAIGKGIAKVLYDKKDYLKKNYEEFKVVAITDSSGAAIDEDGLDLLKAIEVKEKTGKIKNYPEKGREMSSIDVIKEVDADVVVEVTPSNLETGDPAKTHILESFKNKKHVVTANKGPLALCYKELIEEAKKHGVIFRHEASVGGAMPIINLAKETLAGNEILSIRGILNGTTNYILTKMEKEGLDFETALKEAKELGIAETDPTQDIEGLDTAAKIVILANSIMGMNKTIKDVKVKGISRITPEALFLANKRGYTIKLIGQIKDGYLIVEPMLVPIDSPLNVKGTLNVAMFETDLAKEVVVVGRGAGPIETASAILSDLIHIYNSTKK</sequence>
<reference key="1">
    <citation type="journal article" date="1996" name="Science">
        <title>Complete genome sequence of the methanogenic archaeon, Methanococcus jannaschii.</title>
        <authorList>
            <person name="Bult C.J."/>
            <person name="White O."/>
            <person name="Olsen G.J."/>
            <person name="Zhou L."/>
            <person name="Fleischmann R.D."/>
            <person name="Sutton G.G."/>
            <person name="Blake J.A."/>
            <person name="FitzGerald L.M."/>
            <person name="Clayton R.A."/>
            <person name="Gocayne J.D."/>
            <person name="Kerlavage A.R."/>
            <person name="Dougherty B.A."/>
            <person name="Tomb J.-F."/>
            <person name="Adams M.D."/>
            <person name="Reich C.I."/>
            <person name="Overbeek R."/>
            <person name="Kirkness E.F."/>
            <person name="Weinstock K.G."/>
            <person name="Merrick J.M."/>
            <person name="Glodek A."/>
            <person name="Scott J.L."/>
            <person name="Geoghagen N.S.M."/>
            <person name="Weidman J.F."/>
            <person name="Fuhrmann J.L."/>
            <person name="Nguyen D."/>
            <person name="Utterback T.R."/>
            <person name="Kelley J.M."/>
            <person name="Peterson J.D."/>
            <person name="Sadow P.W."/>
            <person name="Hanna M.C."/>
            <person name="Cotton M.D."/>
            <person name="Roberts K.M."/>
            <person name="Hurst M.A."/>
            <person name="Kaine B.P."/>
            <person name="Borodovsky M."/>
            <person name="Klenk H.-P."/>
            <person name="Fraser C.M."/>
            <person name="Smith H.O."/>
            <person name="Woese C.R."/>
            <person name="Venter J.C."/>
        </authorList>
    </citation>
    <scope>NUCLEOTIDE SEQUENCE [LARGE SCALE GENOMIC DNA]</scope>
    <source>
        <strain>ATCC 43067 / DSM 2661 / JAL-1 / JCM 10045 / NBRC 100440</strain>
    </source>
</reference>
<proteinExistence type="inferred from homology"/>
<dbReference type="EC" id="1.1.1.3" evidence="3"/>
<dbReference type="EMBL" id="L77117">
    <property type="protein sequence ID" value="AAB99622.1"/>
    <property type="molecule type" value="Genomic_DNA"/>
</dbReference>
<dbReference type="PIR" id="A64500">
    <property type="entry name" value="A64500"/>
</dbReference>
<dbReference type="RefSeq" id="WP_010871127.1">
    <property type="nucleotide sequence ID" value="NC_000909.1"/>
</dbReference>
<dbReference type="SMR" id="Q58997"/>
<dbReference type="FunCoup" id="Q58997">
    <property type="interactions" value="169"/>
</dbReference>
<dbReference type="STRING" id="243232.MJ_1602"/>
<dbReference type="PaxDb" id="243232-MJ_1602"/>
<dbReference type="EnsemblBacteria" id="AAB99622">
    <property type="protein sequence ID" value="AAB99622"/>
    <property type="gene ID" value="MJ_1602"/>
</dbReference>
<dbReference type="GeneID" id="1452511"/>
<dbReference type="KEGG" id="mja:MJ_1602"/>
<dbReference type="eggNOG" id="arCOG01351">
    <property type="taxonomic scope" value="Archaea"/>
</dbReference>
<dbReference type="HOGENOM" id="CLU_009116_1_2_2"/>
<dbReference type="InParanoid" id="Q58997"/>
<dbReference type="OrthoDB" id="4488at2157"/>
<dbReference type="PhylomeDB" id="Q58997"/>
<dbReference type="UniPathway" id="UPA00050">
    <property type="reaction ID" value="UER00063"/>
</dbReference>
<dbReference type="UniPathway" id="UPA00051">
    <property type="reaction ID" value="UER00465"/>
</dbReference>
<dbReference type="Proteomes" id="UP000000805">
    <property type="component" value="Chromosome"/>
</dbReference>
<dbReference type="GO" id="GO:0004412">
    <property type="term" value="F:homoserine dehydrogenase activity"/>
    <property type="evidence" value="ECO:0000250"/>
    <property type="project" value="UniProtKB"/>
</dbReference>
<dbReference type="GO" id="GO:0046872">
    <property type="term" value="F:metal ion binding"/>
    <property type="evidence" value="ECO:0007669"/>
    <property type="project" value="UniProtKB-KW"/>
</dbReference>
<dbReference type="GO" id="GO:0070403">
    <property type="term" value="F:NAD+ binding"/>
    <property type="evidence" value="ECO:0000250"/>
    <property type="project" value="UniProtKB"/>
</dbReference>
<dbReference type="GO" id="GO:0050661">
    <property type="term" value="F:NADP binding"/>
    <property type="evidence" value="ECO:0007669"/>
    <property type="project" value="InterPro"/>
</dbReference>
<dbReference type="GO" id="GO:0009086">
    <property type="term" value="P:methionine biosynthetic process"/>
    <property type="evidence" value="ECO:0000250"/>
    <property type="project" value="UniProtKB"/>
</dbReference>
<dbReference type="GO" id="GO:0009088">
    <property type="term" value="P:threonine biosynthetic process"/>
    <property type="evidence" value="ECO:0000250"/>
    <property type="project" value="UniProtKB"/>
</dbReference>
<dbReference type="FunFam" id="3.30.360.10:FF:000005">
    <property type="entry name" value="Homoserine dehydrogenase"/>
    <property type="match status" value="1"/>
</dbReference>
<dbReference type="FunFam" id="3.40.50.720:FF:000554">
    <property type="entry name" value="Homoserine dehydrogenase"/>
    <property type="match status" value="1"/>
</dbReference>
<dbReference type="Gene3D" id="3.30.360.10">
    <property type="entry name" value="Dihydrodipicolinate Reductase, domain 2"/>
    <property type="match status" value="1"/>
</dbReference>
<dbReference type="Gene3D" id="3.40.50.720">
    <property type="entry name" value="NAD(P)-binding Rossmann-like Domain"/>
    <property type="match status" value="1"/>
</dbReference>
<dbReference type="InterPro" id="IPR005106">
    <property type="entry name" value="Asp/hSer_DH_NAD-bd"/>
</dbReference>
<dbReference type="InterPro" id="IPR001342">
    <property type="entry name" value="HDH_cat"/>
</dbReference>
<dbReference type="InterPro" id="IPR019811">
    <property type="entry name" value="HDH_CS"/>
</dbReference>
<dbReference type="InterPro" id="IPR022697">
    <property type="entry name" value="HDH_short"/>
</dbReference>
<dbReference type="InterPro" id="IPR036291">
    <property type="entry name" value="NAD(P)-bd_dom_sf"/>
</dbReference>
<dbReference type="NCBIfam" id="NF004912">
    <property type="entry name" value="PRK06270.1"/>
    <property type="match status" value="1"/>
</dbReference>
<dbReference type="NCBIfam" id="NF004976">
    <property type="entry name" value="PRK06349.1"/>
    <property type="match status" value="1"/>
</dbReference>
<dbReference type="PANTHER" id="PTHR43331">
    <property type="entry name" value="HOMOSERINE DEHYDROGENASE"/>
    <property type="match status" value="1"/>
</dbReference>
<dbReference type="PANTHER" id="PTHR43331:SF1">
    <property type="entry name" value="HOMOSERINE DEHYDROGENASE"/>
    <property type="match status" value="1"/>
</dbReference>
<dbReference type="Pfam" id="PF00742">
    <property type="entry name" value="Homoserine_dh"/>
    <property type="match status" value="1"/>
</dbReference>
<dbReference type="Pfam" id="PF03447">
    <property type="entry name" value="NAD_binding_3"/>
    <property type="match status" value="1"/>
</dbReference>
<dbReference type="PIRSF" id="PIRSF036497">
    <property type="entry name" value="HDH_short"/>
    <property type="match status" value="1"/>
</dbReference>
<dbReference type="SUPFAM" id="SSF55347">
    <property type="entry name" value="Glyceraldehyde-3-phosphate dehydrogenase-like, C-terminal domain"/>
    <property type="match status" value="1"/>
</dbReference>
<dbReference type="SUPFAM" id="SSF51735">
    <property type="entry name" value="NAD(P)-binding Rossmann-fold domains"/>
    <property type="match status" value="1"/>
</dbReference>
<dbReference type="PROSITE" id="PS01042">
    <property type="entry name" value="HOMOSER_DHGENASE"/>
    <property type="match status" value="1"/>
</dbReference>
<comment type="function">
    <text evidence="3">Catalyzes the conversion of L-aspartate-beta-semialdehyde (L-Asa) to L-homoserine (L-Hse), the third step in the biosynthesis of threonine and methionine from aspartate.</text>
</comment>
<comment type="catalytic activity">
    <reaction evidence="3">
        <text>L-homoserine + NADP(+) = L-aspartate 4-semialdehyde + NADPH + H(+)</text>
        <dbReference type="Rhea" id="RHEA:15761"/>
        <dbReference type="ChEBI" id="CHEBI:15378"/>
        <dbReference type="ChEBI" id="CHEBI:57476"/>
        <dbReference type="ChEBI" id="CHEBI:57783"/>
        <dbReference type="ChEBI" id="CHEBI:58349"/>
        <dbReference type="ChEBI" id="CHEBI:537519"/>
        <dbReference type="EC" id="1.1.1.3"/>
    </reaction>
    <physiologicalReaction direction="right-to-left" evidence="3">
        <dbReference type="Rhea" id="RHEA:15763"/>
    </physiologicalReaction>
</comment>
<comment type="catalytic activity">
    <reaction evidence="3">
        <text>L-homoserine + NAD(+) = L-aspartate 4-semialdehyde + NADH + H(+)</text>
        <dbReference type="Rhea" id="RHEA:15757"/>
        <dbReference type="ChEBI" id="CHEBI:15378"/>
        <dbReference type="ChEBI" id="CHEBI:57476"/>
        <dbReference type="ChEBI" id="CHEBI:57540"/>
        <dbReference type="ChEBI" id="CHEBI:57945"/>
        <dbReference type="ChEBI" id="CHEBI:537519"/>
        <dbReference type="EC" id="1.1.1.3"/>
    </reaction>
    <physiologicalReaction direction="right-to-left" evidence="3">
        <dbReference type="Rhea" id="RHEA:15759"/>
    </physiologicalReaction>
</comment>
<comment type="cofactor">
    <cofactor evidence="3">
        <name>a metal cation</name>
        <dbReference type="ChEBI" id="CHEBI:25213"/>
    </cofactor>
    <text evidence="3">A sodium ion is seen in the structure; a metal ion may subtly affect the relative position of the nucleotide-binding region to influence enzyme activity, and could increase the stability of the enzyme.</text>
</comment>
<comment type="pathway">
    <text evidence="3">Amino-acid biosynthesis; L-methionine biosynthesis via de novo pathway; L-homoserine from L-aspartate: step 3/3.</text>
</comment>
<comment type="pathway">
    <text evidence="3">Amino-acid biosynthesis; L-threonine biosynthesis; L-threonine from L-aspartate: step 3/5.</text>
</comment>
<comment type="similarity">
    <text evidence="5">Belongs to the homoserine dehydrogenase family.</text>
</comment>
<feature type="chain" id="PRO_0000066705" description="Homoserine dehydrogenase">
    <location>
        <begin position="1"/>
        <end position="336"/>
    </location>
</feature>
<feature type="active site" description="Proton donor" evidence="4">
    <location>
        <position position="223"/>
    </location>
</feature>
<feature type="binding site" evidence="2">
    <location>
        <position position="8"/>
    </location>
    <ligand>
        <name>NADPH</name>
        <dbReference type="ChEBI" id="CHEBI:57783"/>
    </ligand>
</feature>
<feature type="binding site" evidence="3">
    <location>
        <position position="10"/>
    </location>
    <ligand>
        <name>NAD(+)</name>
        <dbReference type="ChEBI" id="CHEBI:57540"/>
    </ligand>
</feature>
<feature type="binding site" evidence="3">
    <location>
        <position position="11"/>
    </location>
    <ligand>
        <name>NAD(+)</name>
        <dbReference type="ChEBI" id="CHEBI:57540"/>
    </ligand>
</feature>
<feature type="binding site" evidence="1">
    <location>
        <position position="11"/>
    </location>
    <ligand>
        <name>NADP(+)</name>
        <dbReference type="ChEBI" id="CHEBI:58349"/>
    </ligand>
</feature>
<feature type="binding site" evidence="2">
    <location>
        <position position="11"/>
    </location>
    <ligand>
        <name>NADPH</name>
        <dbReference type="ChEBI" id="CHEBI:57783"/>
    </ligand>
</feature>
<feature type="binding site" evidence="3">
    <location>
        <position position="94"/>
    </location>
    <ligand>
        <name>NAD(+)</name>
        <dbReference type="ChEBI" id="CHEBI:57540"/>
    </ligand>
</feature>
<feature type="binding site" evidence="1">
    <location>
        <position position="94"/>
    </location>
    <ligand>
        <name>NADP(+)</name>
        <dbReference type="ChEBI" id="CHEBI:58349"/>
    </ligand>
</feature>
<feature type="binding site" evidence="2">
    <location>
        <position position="94"/>
    </location>
    <ligand>
        <name>NADPH</name>
        <dbReference type="ChEBI" id="CHEBI:57783"/>
    </ligand>
</feature>
<feature type="binding site" evidence="1">
    <location>
        <position position="123"/>
    </location>
    <ligand>
        <name>NADP(+)</name>
        <dbReference type="ChEBI" id="CHEBI:58349"/>
    </ligand>
</feature>
<feature type="binding site" evidence="2">
    <location>
        <position position="123"/>
    </location>
    <ligand>
        <name>NADPH</name>
        <dbReference type="ChEBI" id="CHEBI:57783"/>
    </ligand>
</feature>
<feature type="binding site" evidence="3">
    <location>
        <position position="147"/>
    </location>
    <ligand>
        <name>Na(+)</name>
        <dbReference type="ChEBI" id="CHEBI:29101"/>
    </ligand>
</feature>
<feature type="binding site" evidence="3">
    <location>
        <position position="150"/>
    </location>
    <ligand>
        <name>Na(+)</name>
        <dbReference type="ChEBI" id="CHEBI:29101"/>
    </ligand>
</feature>
<feature type="binding site" evidence="3">
    <location>
        <position position="152"/>
    </location>
    <ligand>
        <name>Na(+)</name>
        <dbReference type="ChEBI" id="CHEBI:29101"/>
    </ligand>
</feature>
<feature type="binding site" evidence="1">
    <location>
        <position position="205"/>
    </location>
    <ligand>
        <name>NADP(+)</name>
        <dbReference type="ChEBI" id="CHEBI:58349"/>
    </ligand>
</feature>
<feature type="binding site" evidence="3">
    <location>
        <position position="208"/>
    </location>
    <ligand>
        <name>L-homoserine</name>
        <dbReference type="ChEBI" id="CHEBI:57476"/>
    </ligand>
</feature>
<feature type="binding site" evidence="1">
    <location>
        <position position="208"/>
    </location>
    <ligand>
        <name>NADP(+)</name>
        <dbReference type="ChEBI" id="CHEBI:58349"/>
    </ligand>
</feature>
<feature type="binding site" evidence="3">
    <location>
        <position position="219"/>
    </location>
    <ligand>
        <name>L-homoserine</name>
        <dbReference type="ChEBI" id="CHEBI:57476"/>
    </ligand>
</feature>
<feature type="binding site" evidence="3">
    <location>
        <position position="315"/>
    </location>
    <ligand>
        <name>NAD(+)</name>
        <dbReference type="ChEBI" id="CHEBI:57540"/>
    </ligand>
</feature>
<feature type="binding site" evidence="1">
    <location>
        <position position="315"/>
    </location>
    <ligand>
        <name>NADP(+)</name>
        <dbReference type="ChEBI" id="CHEBI:58349"/>
    </ligand>
</feature>
<feature type="binding site" evidence="2">
    <location>
        <position position="315"/>
    </location>
    <ligand>
        <name>NADPH</name>
        <dbReference type="ChEBI" id="CHEBI:57783"/>
    </ligand>
</feature>
<accession>Q58997</accession>
<gene>
    <name type="primary">hom</name>
    <name type="ordered locus">MJ1602</name>
</gene>
<name>DHOM_METJA</name>
<evidence type="ECO:0000250" key="1">
    <source>
        <dbReference type="UniProtKB" id="F9VNG5"/>
    </source>
</evidence>
<evidence type="ECO:0000250" key="2">
    <source>
        <dbReference type="UniProtKB" id="O58802"/>
    </source>
</evidence>
<evidence type="ECO:0000250" key="3">
    <source>
        <dbReference type="UniProtKB" id="P31116"/>
    </source>
</evidence>
<evidence type="ECO:0000255" key="4"/>
<evidence type="ECO:0000305" key="5"/>
<protein>
    <recommendedName>
        <fullName>Homoserine dehydrogenase</fullName>
        <shortName>HDH</shortName>
        <shortName>HSD</shortName>
        <ecNumber evidence="3">1.1.1.3</ecNumber>
    </recommendedName>
</protein>
<organism>
    <name type="scientific">Methanocaldococcus jannaschii (strain ATCC 43067 / DSM 2661 / JAL-1 / JCM 10045 / NBRC 100440)</name>
    <name type="common">Methanococcus jannaschii</name>
    <dbReference type="NCBI Taxonomy" id="243232"/>
    <lineage>
        <taxon>Archaea</taxon>
        <taxon>Methanobacteriati</taxon>
        <taxon>Methanobacteriota</taxon>
        <taxon>Methanomada group</taxon>
        <taxon>Methanococci</taxon>
        <taxon>Methanococcales</taxon>
        <taxon>Methanocaldococcaceae</taxon>
        <taxon>Methanocaldococcus</taxon>
    </lineage>
</organism>
<keyword id="KW-0028">Amino-acid biosynthesis</keyword>
<keyword id="KW-0479">Metal-binding</keyword>
<keyword id="KW-0486">Methionine biosynthesis</keyword>
<keyword id="KW-0520">NAD</keyword>
<keyword id="KW-0521">NADP</keyword>
<keyword id="KW-0560">Oxidoreductase</keyword>
<keyword id="KW-1185">Reference proteome</keyword>
<keyword id="KW-0915">Sodium</keyword>
<keyword id="KW-0791">Threonine biosynthesis</keyword>